<organism>
    <name type="scientific">Escherichia coli (strain K12 / DH10B)</name>
    <dbReference type="NCBI Taxonomy" id="316385"/>
    <lineage>
        <taxon>Bacteria</taxon>
        <taxon>Pseudomonadati</taxon>
        <taxon>Pseudomonadota</taxon>
        <taxon>Gammaproteobacteria</taxon>
        <taxon>Enterobacterales</taxon>
        <taxon>Enterobacteriaceae</taxon>
        <taxon>Escherichia</taxon>
    </lineage>
</organism>
<reference key="1">
    <citation type="journal article" date="2008" name="J. Bacteriol.">
        <title>The complete genome sequence of Escherichia coli DH10B: insights into the biology of a laboratory workhorse.</title>
        <authorList>
            <person name="Durfee T."/>
            <person name="Nelson R."/>
            <person name="Baldwin S."/>
            <person name="Plunkett G. III"/>
            <person name="Burland V."/>
            <person name="Mau B."/>
            <person name="Petrosino J.F."/>
            <person name="Qin X."/>
            <person name="Muzny D.M."/>
            <person name="Ayele M."/>
            <person name="Gibbs R.A."/>
            <person name="Csorgo B."/>
            <person name="Posfai G."/>
            <person name="Weinstock G.M."/>
            <person name="Blattner F.R."/>
        </authorList>
    </citation>
    <scope>NUCLEOTIDE SEQUENCE [LARGE SCALE GENOMIC DNA]</scope>
    <source>
        <strain>K12 / DH10B</strain>
    </source>
</reference>
<evidence type="ECO:0000255" key="1">
    <source>
        <dbReference type="HAMAP-Rule" id="MF_01101"/>
    </source>
</evidence>
<comment type="subcellular location">
    <subcellularLocation>
        <location evidence="1">Cell inner membrane</location>
        <topology evidence="1">Multi-pass membrane protein</topology>
    </subcellularLocation>
</comment>
<comment type="similarity">
    <text evidence="1">Belongs to the UPF0208 family.</text>
</comment>
<protein>
    <recommendedName>
        <fullName evidence="1">UPF0208 membrane protein YfbV</fullName>
    </recommendedName>
</protein>
<accession>B1X906</accession>
<keyword id="KW-0997">Cell inner membrane</keyword>
<keyword id="KW-1003">Cell membrane</keyword>
<keyword id="KW-0472">Membrane</keyword>
<keyword id="KW-0812">Transmembrane</keyword>
<keyword id="KW-1133">Transmembrane helix</keyword>
<gene>
    <name evidence="1" type="primary">yfbV</name>
    <name type="ordered locus">ECDH10B_2457</name>
</gene>
<proteinExistence type="inferred from homology"/>
<sequence length="151" mass="17213">MSTPDNRSVNFFSLFRRGQHYSKTWPLEKRLAPVFVENRVIKMTRYAIRFMPPIAVFTLCWQIALGGQLGPAVATALFALSLPMQGLWWLGKRSVTPLPPAILNWFYEVRGKLQESGQVLAPVEGKPDYQALADTLKRAFKQLDKTFLDDL</sequence>
<feature type="chain" id="PRO_1000136988" description="UPF0208 membrane protein YfbV">
    <location>
        <begin position="1"/>
        <end position="151"/>
    </location>
</feature>
<feature type="transmembrane region" description="Helical" evidence="1">
    <location>
        <begin position="46"/>
        <end position="65"/>
    </location>
</feature>
<feature type="transmembrane region" description="Helical" evidence="1">
    <location>
        <begin position="69"/>
        <end position="91"/>
    </location>
</feature>
<name>YFBV_ECODH</name>
<dbReference type="EMBL" id="CP000948">
    <property type="protein sequence ID" value="ACB03453.1"/>
    <property type="molecule type" value="Genomic_DNA"/>
</dbReference>
<dbReference type="RefSeq" id="WP_000106627.1">
    <property type="nucleotide sequence ID" value="NC_010473.1"/>
</dbReference>
<dbReference type="GeneID" id="93774879"/>
<dbReference type="KEGG" id="ecd:ECDH10B_2457"/>
<dbReference type="HOGENOM" id="CLU_128746_0_0_6"/>
<dbReference type="GO" id="GO:0005886">
    <property type="term" value="C:plasma membrane"/>
    <property type="evidence" value="ECO:0007669"/>
    <property type="project" value="UniProtKB-SubCell"/>
</dbReference>
<dbReference type="HAMAP" id="MF_01101">
    <property type="entry name" value="UPF0208"/>
    <property type="match status" value="1"/>
</dbReference>
<dbReference type="InterPro" id="IPR007334">
    <property type="entry name" value="UPF0208"/>
</dbReference>
<dbReference type="NCBIfam" id="NF002493">
    <property type="entry name" value="PRK01816.1"/>
    <property type="match status" value="1"/>
</dbReference>
<dbReference type="Pfam" id="PF04217">
    <property type="entry name" value="DUF412"/>
    <property type="match status" value="1"/>
</dbReference>